<organism>
    <name type="scientific">Colwellia psychrerythraea (strain 34H / ATCC BAA-681)</name>
    <name type="common">Vibrio psychroerythus</name>
    <dbReference type="NCBI Taxonomy" id="167879"/>
    <lineage>
        <taxon>Bacteria</taxon>
        <taxon>Pseudomonadati</taxon>
        <taxon>Pseudomonadota</taxon>
        <taxon>Gammaproteobacteria</taxon>
        <taxon>Alteromonadales</taxon>
        <taxon>Colwelliaceae</taxon>
        <taxon>Colwellia</taxon>
    </lineage>
</organism>
<gene>
    <name evidence="1" type="primary">rpsS</name>
    <name type="ordered locus">CPS_0869</name>
</gene>
<proteinExistence type="inferred from homology"/>
<dbReference type="EMBL" id="CP000083">
    <property type="protein sequence ID" value="AAZ27399.1"/>
    <property type="molecule type" value="Genomic_DNA"/>
</dbReference>
<dbReference type="RefSeq" id="WP_011041718.1">
    <property type="nucleotide sequence ID" value="NC_003910.7"/>
</dbReference>
<dbReference type="SMR" id="Q487Z7"/>
<dbReference type="STRING" id="167879.CPS_0869"/>
<dbReference type="KEGG" id="cps:CPS_0869"/>
<dbReference type="eggNOG" id="COG0185">
    <property type="taxonomic scope" value="Bacteria"/>
</dbReference>
<dbReference type="HOGENOM" id="CLU_144911_0_1_6"/>
<dbReference type="Proteomes" id="UP000000547">
    <property type="component" value="Chromosome"/>
</dbReference>
<dbReference type="GO" id="GO:0005737">
    <property type="term" value="C:cytoplasm"/>
    <property type="evidence" value="ECO:0007669"/>
    <property type="project" value="UniProtKB-ARBA"/>
</dbReference>
<dbReference type="GO" id="GO:0015935">
    <property type="term" value="C:small ribosomal subunit"/>
    <property type="evidence" value="ECO:0007669"/>
    <property type="project" value="InterPro"/>
</dbReference>
<dbReference type="GO" id="GO:0019843">
    <property type="term" value="F:rRNA binding"/>
    <property type="evidence" value="ECO:0007669"/>
    <property type="project" value="UniProtKB-UniRule"/>
</dbReference>
<dbReference type="GO" id="GO:0003735">
    <property type="term" value="F:structural constituent of ribosome"/>
    <property type="evidence" value="ECO:0007669"/>
    <property type="project" value="InterPro"/>
</dbReference>
<dbReference type="GO" id="GO:0000028">
    <property type="term" value="P:ribosomal small subunit assembly"/>
    <property type="evidence" value="ECO:0007669"/>
    <property type="project" value="TreeGrafter"/>
</dbReference>
<dbReference type="GO" id="GO:0006412">
    <property type="term" value="P:translation"/>
    <property type="evidence" value="ECO:0007669"/>
    <property type="project" value="UniProtKB-UniRule"/>
</dbReference>
<dbReference type="FunFam" id="3.30.860.10:FF:000001">
    <property type="entry name" value="30S ribosomal protein S19"/>
    <property type="match status" value="1"/>
</dbReference>
<dbReference type="Gene3D" id="3.30.860.10">
    <property type="entry name" value="30s Ribosomal Protein S19, Chain A"/>
    <property type="match status" value="1"/>
</dbReference>
<dbReference type="HAMAP" id="MF_00531">
    <property type="entry name" value="Ribosomal_uS19"/>
    <property type="match status" value="1"/>
</dbReference>
<dbReference type="InterPro" id="IPR002222">
    <property type="entry name" value="Ribosomal_uS19"/>
</dbReference>
<dbReference type="InterPro" id="IPR005732">
    <property type="entry name" value="Ribosomal_uS19_bac-type"/>
</dbReference>
<dbReference type="InterPro" id="IPR020934">
    <property type="entry name" value="Ribosomal_uS19_CS"/>
</dbReference>
<dbReference type="InterPro" id="IPR023575">
    <property type="entry name" value="Ribosomal_uS19_SF"/>
</dbReference>
<dbReference type="NCBIfam" id="TIGR01050">
    <property type="entry name" value="rpsS_bact"/>
    <property type="match status" value="1"/>
</dbReference>
<dbReference type="PANTHER" id="PTHR11880">
    <property type="entry name" value="RIBOSOMAL PROTEIN S19P FAMILY MEMBER"/>
    <property type="match status" value="1"/>
</dbReference>
<dbReference type="PANTHER" id="PTHR11880:SF8">
    <property type="entry name" value="SMALL RIBOSOMAL SUBUNIT PROTEIN US19M"/>
    <property type="match status" value="1"/>
</dbReference>
<dbReference type="Pfam" id="PF00203">
    <property type="entry name" value="Ribosomal_S19"/>
    <property type="match status" value="1"/>
</dbReference>
<dbReference type="PIRSF" id="PIRSF002144">
    <property type="entry name" value="Ribosomal_S19"/>
    <property type="match status" value="1"/>
</dbReference>
<dbReference type="PRINTS" id="PR00975">
    <property type="entry name" value="RIBOSOMALS19"/>
</dbReference>
<dbReference type="SUPFAM" id="SSF54570">
    <property type="entry name" value="Ribosomal protein S19"/>
    <property type="match status" value="1"/>
</dbReference>
<dbReference type="PROSITE" id="PS00323">
    <property type="entry name" value="RIBOSOMAL_S19"/>
    <property type="match status" value="1"/>
</dbReference>
<name>RS19_COLP3</name>
<reference key="1">
    <citation type="journal article" date="2005" name="Proc. Natl. Acad. Sci. U.S.A.">
        <title>The psychrophilic lifestyle as revealed by the genome sequence of Colwellia psychrerythraea 34H through genomic and proteomic analyses.</title>
        <authorList>
            <person name="Methe B.A."/>
            <person name="Nelson K.E."/>
            <person name="Deming J.W."/>
            <person name="Momen B."/>
            <person name="Melamud E."/>
            <person name="Zhang X."/>
            <person name="Moult J."/>
            <person name="Madupu R."/>
            <person name="Nelson W.C."/>
            <person name="Dodson R.J."/>
            <person name="Brinkac L.M."/>
            <person name="Daugherty S.C."/>
            <person name="Durkin A.S."/>
            <person name="DeBoy R.T."/>
            <person name="Kolonay J.F."/>
            <person name="Sullivan S.A."/>
            <person name="Zhou L."/>
            <person name="Davidsen T.M."/>
            <person name="Wu M."/>
            <person name="Huston A.L."/>
            <person name="Lewis M."/>
            <person name="Weaver B."/>
            <person name="Weidman J.F."/>
            <person name="Khouri H."/>
            <person name="Utterback T.R."/>
            <person name="Feldblyum T.V."/>
            <person name="Fraser C.M."/>
        </authorList>
    </citation>
    <scope>NUCLEOTIDE SEQUENCE [LARGE SCALE GENOMIC DNA]</scope>
    <source>
        <strain>34H / ATCC BAA-681</strain>
    </source>
</reference>
<comment type="function">
    <text evidence="1">Protein S19 forms a complex with S13 that binds strongly to the 16S ribosomal RNA.</text>
</comment>
<comment type="similarity">
    <text evidence="1">Belongs to the universal ribosomal protein uS19 family.</text>
</comment>
<feature type="chain" id="PRO_0000265350" description="Small ribosomal subunit protein uS19">
    <location>
        <begin position="1"/>
        <end position="91"/>
    </location>
</feature>
<sequence>MPRSLKKGPFIDLHLLTKVEKAVESGNKKPIKTWSRRSMIIPTMIGLTIAVHNGRQHVPVFVTEEMIGHKLGEFAPTRTYRGHVADKKAKK</sequence>
<accession>Q487Z7</accession>
<keyword id="KW-0687">Ribonucleoprotein</keyword>
<keyword id="KW-0689">Ribosomal protein</keyword>
<keyword id="KW-0694">RNA-binding</keyword>
<keyword id="KW-0699">rRNA-binding</keyword>
<evidence type="ECO:0000255" key="1">
    <source>
        <dbReference type="HAMAP-Rule" id="MF_00531"/>
    </source>
</evidence>
<evidence type="ECO:0000305" key="2"/>
<protein>
    <recommendedName>
        <fullName evidence="1">Small ribosomal subunit protein uS19</fullName>
    </recommendedName>
    <alternativeName>
        <fullName evidence="2">30S ribosomal protein S19</fullName>
    </alternativeName>
</protein>